<protein>
    <recommendedName>
        <fullName evidence="1">Alanine racemase</fullName>
        <ecNumber evidence="1">5.1.1.1</ecNumber>
    </recommendedName>
</protein>
<organism>
    <name type="scientific">Chromohalobacter salexigens (strain ATCC BAA-138 / DSM 3043 / CIP 106854 / NCIMB 13768 / 1H11)</name>
    <dbReference type="NCBI Taxonomy" id="290398"/>
    <lineage>
        <taxon>Bacteria</taxon>
        <taxon>Pseudomonadati</taxon>
        <taxon>Pseudomonadota</taxon>
        <taxon>Gammaproteobacteria</taxon>
        <taxon>Oceanospirillales</taxon>
        <taxon>Halomonadaceae</taxon>
        <taxon>Chromohalobacter</taxon>
    </lineage>
</organism>
<keyword id="KW-0413">Isomerase</keyword>
<keyword id="KW-0663">Pyridoxal phosphate</keyword>
<keyword id="KW-1185">Reference proteome</keyword>
<sequence>MSRPLIADIDLDALRRNYCLARDQAPHSRAIAVVKADAYGHGAVACADALRDLAPAFAVACLEEALTLREAGITQPIVLLEGFFDAAELSLIDAHRLWTAVHSDWQIDALLAYRPRQPIPTWLKLDSGMHRLGFAPEAFEARWQRLAAATEHVTDLHLMTHFATADALDAAYFRRQMACIASLRQRLEAPVCLANSPATLAWPEAHGDWNRPGVMLYGSDPLEGANDASRALEPVMTLRSEIIAVRELAEGEAVGYGGRWRASRPSRIGVVAGGYGDGYDRHARDGTPVLVEGQRVPLAGKVSMDMLTVDLTELPEAGIGSPVVLWGEGLPIDEVARHCDTISYTLMTGVLPRVPRRYRNAETG</sequence>
<evidence type="ECO:0000255" key="1">
    <source>
        <dbReference type="HAMAP-Rule" id="MF_01201"/>
    </source>
</evidence>
<dbReference type="EC" id="5.1.1.1" evidence="1"/>
<dbReference type="EMBL" id="CP000285">
    <property type="protein sequence ID" value="ABE59976.1"/>
    <property type="molecule type" value="Genomic_DNA"/>
</dbReference>
<dbReference type="RefSeq" id="WP_011507922.1">
    <property type="nucleotide sequence ID" value="NC_007963.1"/>
</dbReference>
<dbReference type="SMR" id="Q1QU82"/>
<dbReference type="STRING" id="290398.Csal_2629"/>
<dbReference type="GeneID" id="95335327"/>
<dbReference type="KEGG" id="csa:Csal_2629"/>
<dbReference type="eggNOG" id="COG0787">
    <property type="taxonomic scope" value="Bacteria"/>
</dbReference>
<dbReference type="HOGENOM" id="CLU_028393_1_0_6"/>
<dbReference type="OrthoDB" id="9813814at2"/>
<dbReference type="UniPathway" id="UPA00042">
    <property type="reaction ID" value="UER00497"/>
</dbReference>
<dbReference type="Proteomes" id="UP000000239">
    <property type="component" value="Chromosome"/>
</dbReference>
<dbReference type="GO" id="GO:0005829">
    <property type="term" value="C:cytosol"/>
    <property type="evidence" value="ECO:0007669"/>
    <property type="project" value="TreeGrafter"/>
</dbReference>
<dbReference type="GO" id="GO:0008784">
    <property type="term" value="F:alanine racemase activity"/>
    <property type="evidence" value="ECO:0007669"/>
    <property type="project" value="UniProtKB-UniRule"/>
</dbReference>
<dbReference type="GO" id="GO:0030170">
    <property type="term" value="F:pyridoxal phosphate binding"/>
    <property type="evidence" value="ECO:0007669"/>
    <property type="project" value="UniProtKB-UniRule"/>
</dbReference>
<dbReference type="GO" id="GO:0030632">
    <property type="term" value="P:D-alanine biosynthetic process"/>
    <property type="evidence" value="ECO:0007669"/>
    <property type="project" value="UniProtKB-UniRule"/>
</dbReference>
<dbReference type="CDD" id="cd06827">
    <property type="entry name" value="PLPDE_III_AR_proteobact"/>
    <property type="match status" value="1"/>
</dbReference>
<dbReference type="FunFam" id="2.40.37.10:FF:000002">
    <property type="entry name" value="Alanine racemase"/>
    <property type="match status" value="1"/>
</dbReference>
<dbReference type="FunFam" id="3.20.20.10:FF:000002">
    <property type="entry name" value="Alanine racemase"/>
    <property type="match status" value="1"/>
</dbReference>
<dbReference type="Gene3D" id="3.20.20.10">
    <property type="entry name" value="Alanine racemase"/>
    <property type="match status" value="1"/>
</dbReference>
<dbReference type="Gene3D" id="2.40.37.10">
    <property type="entry name" value="Lyase, Ornithine Decarboxylase, Chain A, domain 1"/>
    <property type="match status" value="1"/>
</dbReference>
<dbReference type="HAMAP" id="MF_01201">
    <property type="entry name" value="Ala_racemase"/>
    <property type="match status" value="1"/>
</dbReference>
<dbReference type="InterPro" id="IPR000821">
    <property type="entry name" value="Ala_racemase"/>
</dbReference>
<dbReference type="InterPro" id="IPR009006">
    <property type="entry name" value="Ala_racemase/Decarboxylase_C"/>
</dbReference>
<dbReference type="InterPro" id="IPR011079">
    <property type="entry name" value="Ala_racemase_C"/>
</dbReference>
<dbReference type="InterPro" id="IPR001608">
    <property type="entry name" value="Ala_racemase_N"/>
</dbReference>
<dbReference type="InterPro" id="IPR020622">
    <property type="entry name" value="Ala_racemase_pyridoxalP-BS"/>
</dbReference>
<dbReference type="InterPro" id="IPR029066">
    <property type="entry name" value="PLP-binding_barrel"/>
</dbReference>
<dbReference type="NCBIfam" id="TIGR00492">
    <property type="entry name" value="alr"/>
    <property type="match status" value="1"/>
</dbReference>
<dbReference type="PANTHER" id="PTHR30511">
    <property type="entry name" value="ALANINE RACEMASE"/>
    <property type="match status" value="1"/>
</dbReference>
<dbReference type="PANTHER" id="PTHR30511:SF0">
    <property type="entry name" value="ALANINE RACEMASE, CATABOLIC-RELATED"/>
    <property type="match status" value="1"/>
</dbReference>
<dbReference type="Pfam" id="PF00842">
    <property type="entry name" value="Ala_racemase_C"/>
    <property type="match status" value="1"/>
</dbReference>
<dbReference type="Pfam" id="PF01168">
    <property type="entry name" value="Ala_racemase_N"/>
    <property type="match status" value="1"/>
</dbReference>
<dbReference type="PRINTS" id="PR00992">
    <property type="entry name" value="ALARACEMASE"/>
</dbReference>
<dbReference type="SMART" id="SM01005">
    <property type="entry name" value="Ala_racemase_C"/>
    <property type="match status" value="1"/>
</dbReference>
<dbReference type="SUPFAM" id="SSF50621">
    <property type="entry name" value="Alanine racemase C-terminal domain-like"/>
    <property type="match status" value="1"/>
</dbReference>
<dbReference type="SUPFAM" id="SSF51419">
    <property type="entry name" value="PLP-binding barrel"/>
    <property type="match status" value="1"/>
</dbReference>
<dbReference type="PROSITE" id="PS00395">
    <property type="entry name" value="ALANINE_RACEMASE"/>
    <property type="match status" value="1"/>
</dbReference>
<accession>Q1QU82</accession>
<name>ALR_CHRSD</name>
<feature type="chain" id="PRO_1000065978" description="Alanine racemase">
    <location>
        <begin position="1"/>
        <end position="364"/>
    </location>
</feature>
<feature type="active site" description="Proton acceptor; specific for D-alanine" evidence="1">
    <location>
        <position position="35"/>
    </location>
</feature>
<feature type="active site" description="Proton acceptor; specific for L-alanine" evidence="1">
    <location>
        <position position="256"/>
    </location>
</feature>
<feature type="binding site" evidence="1">
    <location>
        <position position="131"/>
    </location>
    <ligand>
        <name>substrate</name>
    </ligand>
</feature>
<feature type="binding site" evidence="1">
    <location>
        <position position="304"/>
    </location>
    <ligand>
        <name>substrate</name>
    </ligand>
</feature>
<feature type="modified residue" description="N6-(pyridoxal phosphate)lysine" evidence="1">
    <location>
        <position position="35"/>
    </location>
</feature>
<gene>
    <name type="primary">alr</name>
    <name type="ordered locus">Csal_2629</name>
</gene>
<reference key="1">
    <citation type="journal article" date="2011" name="Stand. Genomic Sci.">
        <title>Complete genome sequence of the halophilic and highly halotolerant Chromohalobacter salexigens type strain (1H11(T)).</title>
        <authorList>
            <person name="Copeland A."/>
            <person name="O'Connor K."/>
            <person name="Lucas S."/>
            <person name="Lapidus A."/>
            <person name="Berry K.W."/>
            <person name="Detter J.C."/>
            <person name="Del Rio T.G."/>
            <person name="Hammon N."/>
            <person name="Dalin E."/>
            <person name="Tice H."/>
            <person name="Pitluck S."/>
            <person name="Bruce D."/>
            <person name="Goodwin L."/>
            <person name="Han C."/>
            <person name="Tapia R."/>
            <person name="Saunders E."/>
            <person name="Schmutz J."/>
            <person name="Brettin T."/>
            <person name="Larimer F."/>
            <person name="Land M."/>
            <person name="Hauser L."/>
            <person name="Vargas C."/>
            <person name="Nieto J.J."/>
            <person name="Kyrpides N.C."/>
            <person name="Ivanova N."/>
            <person name="Goker M."/>
            <person name="Klenk H.P."/>
            <person name="Csonka L.N."/>
            <person name="Woyke T."/>
        </authorList>
    </citation>
    <scope>NUCLEOTIDE SEQUENCE [LARGE SCALE GENOMIC DNA]</scope>
    <source>
        <strain>ATCC BAA-138 / DSM 3043 / CIP 106854 / NCIMB 13768 / 1H11</strain>
    </source>
</reference>
<comment type="function">
    <text evidence="1">Catalyzes the interconversion of L-alanine and D-alanine. May also act on other amino acids.</text>
</comment>
<comment type="catalytic activity">
    <reaction evidence="1">
        <text>L-alanine = D-alanine</text>
        <dbReference type="Rhea" id="RHEA:20249"/>
        <dbReference type="ChEBI" id="CHEBI:57416"/>
        <dbReference type="ChEBI" id="CHEBI:57972"/>
        <dbReference type="EC" id="5.1.1.1"/>
    </reaction>
</comment>
<comment type="cofactor">
    <cofactor evidence="1">
        <name>pyridoxal 5'-phosphate</name>
        <dbReference type="ChEBI" id="CHEBI:597326"/>
    </cofactor>
</comment>
<comment type="pathway">
    <text evidence="1">Amino-acid biosynthesis; D-alanine biosynthesis; D-alanine from L-alanine: step 1/1.</text>
</comment>
<comment type="similarity">
    <text evidence="1">Belongs to the alanine racemase family.</text>
</comment>
<proteinExistence type="inferred from homology"/>